<reference key="1">
    <citation type="submission" date="2007-05" db="EMBL/GenBank/DDBJ databases">
        <title>Complete sequence of chromosome of Staphylococcus aureus subsp. aureus JH9.</title>
        <authorList>
            <consortium name="US DOE Joint Genome Institute"/>
            <person name="Copeland A."/>
            <person name="Lucas S."/>
            <person name="Lapidus A."/>
            <person name="Barry K."/>
            <person name="Detter J.C."/>
            <person name="Glavina del Rio T."/>
            <person name="Hammon N."/>
            <person name="Israni S."/>
            <person name="Pitluck S."/>
            <person name="Chain P."/>
            <person name="Malfatti S."/>
            <person name="Shin M."/>
            <person name="Vergez L."/>
            <person name="Schmutz J."/>
            <person name="Larimer F."/>
            <person name="Land M."/>
            <person name="Hauser L."/>
            <person name="Kyrpides N."/>
            <person name="Kim E."/>
            <person name="Tomasz A."/>
            <person name="Richardson P."/>
        </authorList>
    </citation>
    <scope>NUCLEOTIDE SEQUENCE [LARGE SCALE GENOMIC DNA]</scope>
    <source>
        <strain>JH9</strain>
    </source>
</reference>
<dbReference type="EMBL" id="CP000703">
    <property type="protein sequence ID" value="ABQ49130.1"/>
    <property type="molecule type" value="Genomic_DNA"/>
</dbReference>
<dbReference type="RefSeq" id="WP_001018328.1">
    <property type="nucleotide sequence ID" value="NC_009487.1"/>
</dbReference>
<dbReference type="SMR" id="A5ISF7"/>
<dbReference type="KEGG" id="saj:SaurJH9_1333"/>
<dbReference type="HOGENOM" id="CLU_148518_0_0_9"/>
<dbReference type="GO" id="GO:0022627">
    <property type="term" value="C:cytosolic small ribosomal subunit"/>
    <property type="evidence" value="ECO:0007669"/>
    <property type="project" value="TreeGrafter"/>
</dbReference>
<dbReference type="GO" id="GO:0019843">
    <property type="term" value="F:rRNA binding"/>
    <property type="evidence" value="ECO:0007669"/>
    <property type="project" value="UniProtKB-UniRule"/>
</dbReference>
<dbReference type="GO" id="GO:0003735">
    <property type="term" value="F:structural constituent of ribosome"/>
    <property type="evidence" value="ECO:0007669"/>
    <property type="project" value="InterPro"/>
</dbReference>
<dbReference type="GO" id="GO:0006412">
    <property type="term" value="P:translation"/>
    <property type="evidence" value="ECO:0007669"/>
    <property type="project" value="UniProtKB-UniRule"/>
</dbReference>
<dbReference type="CDD" id="cd00353">
    <property type="entry name" value="Ribosomal_S15p_S13e"/>
    <property type="match status" value="1"/>
</dbReference>
<dbReference type="FunFam" id="1.10.287.10:FF:000002">
    <property type="entry name" value="30S ribosomal protein S15"/>
    <property type="match status" value="1"/>
</dbReference>
<dbReference type="Gene3D" id="6.10.250.3130">
    <property type="match status" value="1"/>
</dbReference>
<dbReference type="Gene3D" id="1.10.287.10">
    <property type="entry name" value="S15/NS1, RNA-binding"/>
    <property type="match status" value="1"/>
</dbReference>
<dbReference type="HAMAP" id="MF_01343_B">
    <property type="entry name" value="Ribosomal_uS15_B"/>
    <property type="match status" value="1"/>
</dbReference>
<dbReference type="InterPro" id="IPR000589">
    <property type="entry name" value="Ribosomal_uS15"/>
</dbReference>
<dbReference type="InterPro" id="IPR005290">
    <property type="entry name" value="Ribosomal_uS15_bac-type"/>
</dbReference>
<dbReference type="InterPro" id="IPR009068">
    <property type="entry name" value="uS15_NS1_RNA-bd_sf"/>
</dbReference>
<dbReference type="NCBIfam" id="TIGR00952">
    <property type="entry name" value="S15_bact"/>
    <property type="match status" value="1"/>
</dbReference>
<dbReference type="PANTHER" id="PTHR23321">
    <property type="entry name" value="RIBOSOMAL PROTEIN S15, BACTERIAL AND ORGANELLAR"/>
    <property type="match status" value="1"/>
</dbReference>
<dbReference type="PANTHER" id="PTHR23321:SF26">
    <property type="entry name" value="SMALL RIBOSOMAL SUBUNIT PROTEIN US15M"/>
    <property type="match status" value="1"/>
</dbReference>
<dbReference type="Pfam" id="PF00312">
    <property type="entry name" value="Ribosomal_S15"/>
    <property type="match status" value="1"/>
</dbReference>
<dbReference type="SMART" id="SM01387">
    <property type="entry name" value="Ribosomal_S15"/>
    <property type="match status" value="1"/>
</dbReference>
<dbReference type="SUPFAM" id="SSF47060">
    <property type="entry name" value="S15/NS1 RNA-binding domain"/>
    <property type="match status" value="1"/>
</dbReference>
<dbReference type="PROSITE" id="PS00362">
    <property type="entry name" value="RIBOSOMAL_S15"/>
    <property type="match status" value="1"/>
</dbReference>
<proteinExistence type="inferred from homology"/>
<feature type="chain" id="PRO_1000086824" description="Small ribosomal subunit protein uS15">
    <location>
        <begin position="1"/>
        <end position="89"/>
    </location>
</feature>
<comment type="function">
    <text evidence="1">One of the primary rRNA binding proteins, it binds directly to 16S rRNA where it helps nucleate assembly of the platform of the 30S subunit by binding and bridging several RNA helices of the 16S rRNA.</text>
</comment>
<comment type="function">
    <text evidence="1">Forms an intersubunit bridge (bridge B4) with the 23S rRNA of the 50S subunit in the ribosome.</text>
</comment>
<comment type="subunit">
    <text evidence="1">Part of the 30S ribosomal subunit. Forms a bridge to the 50S subunit in the 70S ribosome, contacting the 23S rRNA.</text>
</comment>
<comment type="similarity">
    <text evidence="1">Belongs to the universal ribosomal protein uS15 family.</text>
</comment>
<gene>
    <name evidence="1" type="primary">rpsO</name>
    <name type="ordered locus">SaurJH9_1333</name>
</gene>
<name>RS15_STAA9</name>
<protein>
    <recommendedName>
        <fullName evidence="1">Small ribosomal subunit protein uS15</fullName>
    </recommendedName>
    <alternativeName>
        <fullName evidence="2">30S ribosomal protein S15</fullName>
    </alternativeName>
</protein>
<accession>A5ISF7</accession>
<evidence type="ECO:0000255" key="1">
    <source>
        <dbReference type="HAMAP-Rule" id="MF_01343"/>
    </source>
</evidence>
<evidence type="ECO:0000305" key="2"/>
<keyword id="KW-0687">Ribonucleoprotein</keyword>
<keyword id="KW-0689">Ribosomal protein</keyword>
<keyword id="KW-0694">RNA-binding</keyword>
<keyword id="KW-0699">rRNA-binding</keyword>
<sequence length="89" mass="10608">MAISQERKNEIIKEYRVHETDTGSPEVQIAVLTAEINAVNEHLRTHKKDHHSRRGLLKMVGRRRHLLNYLRSKDIQRYRELIKSLGIRR</sequence>
<organism>
    <name type="scientific">Staphylococcus aureus (strain JH9)</name>
    <dbReference type="NCBI Taxonomy" id="359786"/>
    <lineage>
        <taxon>Bacteria</taxon>
        <taxon>Bacillati</taxon>
        <taxon>Bacillota</taxon>
        <taxon>Bacilli</taxon>
        <taxon>Bacillales</taxon>
        <taxon>Staphylococcaceae</taxon>
        <taxon>Staphylococcus</taxon>
    </lineage>
</organism>